<name>IFIT1_HUMAN</name>
<keyword id="KW-0002">3D-structure</keyword>
<keyword id="KW-0025">Alternative splicing</keyword>
<keyword id="KW-0051">Antiviral defense</keyword>
<keyword id="KW-0963">Cytoplasm</keyword>
<keyword id="KW-0945">Host-virus interaction</keyword>
<keyword id="KW-0391">Immunity</keyword>
<keyword id="KW-0399">Innate immunity</keyword>
<keyword id="KW-0597">Phosphoprotein</keyword>
<keyword id="KW-1267">Proteomics identification</keyword>
<keyword id="KW-1185">Reference proteome</keyword>
<keyword id="KW-0677">Repeat</keyword>
<keyword id="KW-0694">RNA-binding</keyword>
<keyword id="KW-0802">TPR repeat</keyword>
<keyword id="KW-0832">Ubl conjugation</keyword>
<gene>
    <name evidence="23" type="primary">IFIT1</name>
    <name evidence="23" type="synonym">G10P1</name>
    <name evidence="23" type="synonym">IFI56</name>
    <name evidence="23" type="synonym">IFNAI1</name>
    <name evidence="18" type="synonym">ISG56</name>
</gene>
<dbReference type="EMBL" id="X03557">
    <property type="protein sequence ID" value="CAA27244.1"/>
    <property type="molecule type" value="mRNA"/>
</dbReference>
<dbReference type="EMBL" id="BT006667">
    <property type="protein sequence ID" value="AAP35313.1"/>
    <property type="molecule type" value="mRNA"/>
</dbReference>
<dbReference type="EMBL" id="AK092813">
    <property type="protein sequence ID" value="BAG52612.1"/>
    <property type="molecule type" value="mRNA"/>
</dbReference>
<dbReference type="EMBL" id="AK314588">
    <property type="protein sequence ID" value="BAG37163.1"/>
    <property type="molecule type" value="mRNA"/>
</dbReference>
<dbReference type="EMBL" id="AL353146">
    <property type="status" value="NOT_ANNOTATED_CDS"/>
    <property type="molecule type" value="Genomic_DNA"/>
</dbReference>
<dbReference type="EMBL" id="CH471066">
    <property type="protein sequence ID" value="EAW50136.1"/>
    <property type="molecule type" value="Genomic_DNA"/>
</dbReference>
<dbReference type="EMBL" id="CH471066">
    <property type="protein sequence ID" value="EAW50137.1"/>
    <property type="molecule type" value="Genomic_DNA"/>
</dbReference>
<dbReference type="EMBL" id="CH471066">
    <property type="protein sequence ID" value="EAW50138.1"/>
    <property type="molecule type" value="Genomic_DNA"/>
</dbReference>
<dbReference type="EMBL" id="BC007091">
    <property type="protein sequence ID" value="AAH07091.1"/>
    <property type="molecule type" value="mRNA"/>
</dbReference>
<dbReference type="EMBL" id="X06559">
    <property type="protein sequence ID" value="CAA29802.1"/>
    <property type="molecule type" value="Genomic_DNA"/>
</dbReference>
<dbReference type="CCDS" id="CCDS31243.1">
    <molecule id="P09914-1"/>
</dbReference>
<dbReference type="CCDS" id="CCDS59220.1">
    <molecule id="P09914-2"/>
</dbReference>
<dbReference type="PIR" id="A25407">
    <property type="entry name" value="A25407"/>
</dbReference>
<dbReference type="RefSeq" id="NP_001257857.1">
    <molecule id="P09914-2"/>
    <property type="nucleotide sequence ID" value="NM_001270928.2"/>
</dbReference>
<dbReference type="RefSeq" id="NP_001257858.1">
    <molecule id="P09914-2"/>
    <property type="nucleotide sequence ID" value="NM_001270929.2"/>
</dbReference>
<dbReference type="RefSeq" id="NP_001257859.1">
    <molecule id="P09914-2"/>
    <property type="nucleotide sequence ID" value="NM_001270930.2"/>
</dbReference>
<dbReference type="RefSeq" id="NP_001539.3">
    <molecule id="P09914-1"/>
    <property type="nucleotide sequence ID" value="NM_001548.5"/>
</dbReference>
<dbReference type="PDB" id="4HOU">
    <property type="method" value="X-ray"/>
    <property type="resolution" value="1.95 A"/>
    <property type="chains" value="A/B=7-279"/>
</dbReference>
<dbReference type="PDB" id="5UDI">
    <property type="method" value="X-ray"/>
    <property type="resolution" value="1.58 A"/>
    <property type="chains" value="A=1-478"/>
</dbReference>
<dbReference type="PDB" id="5UDJ">
    <property type="method" value="X-ray"/>
    <property type="resolution" value="1.69 A"/>
    <property type="chains" value="A=1-478"/>
</dbReference>
<dbReference type="PDB" id="5UDK">
    <property type="method" value="X-ray"/>
    <property type="resolution" value="1.65 A"/>
    <property type="chains" value="A=1-478"/>
</dbReference>
<dbReference type="PDB" id="5UDL">
    <property type="method" value="X-ray"/>
    <property type="resolution" value="1.65 A"/>
    <property type="chains" value="A=1-478"/>
</dbReference>
<dbReference type="PDB" id="5W5H">
    <property type="method" value="X-ray"/>
    <property type="resolution" value="2.79 A"/>
    <property type="chains" value="A/C=1-478"/>
</dbReference>
<dbReference type="PDB" id="5W5I">
    <property type="method" value="X-ray"/>
    <property type="resolution" value="2.65 A"/>
    <property type="chains" value="A/C=1-478"/>
</dbReference>
<dbReference type="PDB" id="6C6K">
    <property type="method" value="X-ray"/>
    <property type="resolution" value="2.54 A"/>
    <property type="chains" value="A/B=7-471"/>
</dbReference>
<dbReference type="PDBsum" id="4HOU"/>
<dbReference type="PDBsum" id="5UDI"/>
<dbReference type="PDBsum" id="5UDJ"/>
<dbReference type="PDBsum" id="5UDK"/>
<dbReference type="PDBsum" id="5UDL"/>
<dbReference type="PDBsum" id="5W5H"/>
<dbReference type="PDBsum" id="5W5I"/>
<dbReference type="PDBsum" id="6C6K"/>
<dbReference type="SMR" id="P09914"/>
<dbReference type="BioGRID" id="109659">
    <property type="interactions" value="73"/>
</dbReference>
<dbReference type="CORUM" id="P09914"/>
<dbReference type="DIP" id="DIP-37898N"/>
<dbReference type="FunCoup" id="P09914">
    <property type="interactions" value="738"/>
</dbReference>
<dbReference type="IntAct" id="P09914">
    <property type="interactions" value="50"/>
</dbReference>
<dbReference type="MINT" id="P09914"/>
<dbReference type="STRING" id="9606.ENSP00000360869"/>
<dbReference type="iPTMnet" id="P09914"/>
<dbReference type="PhosphoSitePlus" id="P09914"/>
<dbReference type="BioMuta" id="IFIT1"/>
<dbReference type="DMDM" id="116242522"/>
<dbReference type="jPOST" id="P09914"/>
<dbReference type="MassIVE" id="P09914"/>
<dbReference type="PaxDb" id="9606-ENSP00000360869"/>
<dbReference type="PeptideAtlas" id="P09914"/>
<dbReference type="ProteomicsDB" id="12754"/>
<dbReference type="ProteomicsDB" id="52277">
    <molecule id="P09914-1"/>
</dbReference>
<dbReference type="Pumba" id="P09914"/>
<dbReference type="Antibodypedia" id="30269">
    <property type="antibodies" value="259 antibodies from 31 providers"/>
</dbReference>
<dbReference type="CPTC" id="P09914">
    <property type="antibodies" value="1 antibody"/>
</dbReference>
<dbReference type="DNASU" id="3434"/>
<dbReference type="Ensembl" id="ENST00000371804.4">
    <molecule id="P09914-1"/>
    <property type="protein sequence ID" value="ENSP00000360869.3"/>
    <property type="gene ID" value="ENSG00000185745.10"/>
</dbReference>
<dbReference type="Ensembl" id="ENST00000546318.2">
    <molecule id="P09914-2"/>
    <property type="protein sequence ID" value="ENSP00000441968.1"/>
    <property type="gene ID" value="ENSG00000185745.10"/>
</dbReference>
<dbReference type="GeneID" id="3434"/>
<dbReference type="KEGG" id="hsa:3434"/>
<dbReference type="MANE-Select" id="ENST00000371804.4">
    <property type="protein sequence ID" value="ENSP00000360869.3"/>
    <property type="RefSeq nucleotide sequence ID" value="NM_001548.5"/>
    <property type="RefSeq protein sequence ID" value="NP_001539.3"/>
</dbReference>
<dbReference type="UCSC" id="uc001kgi.5">
    <molecule id="P09914-1"/>
    <property type="organism name" value="human"/>
</dbReference>
<dbReference type="AGR" id="HGNC:5407"/>
<dbReference type="CTD" id="3434"/>
<dbReference type="DisGeNET" id="3434"/>
<dbReference type="GeneCards" id="IFIT1"/>
<dbReference type="HGNC" id="HGNC:5407">
    <property type="gene designation" value="IFIT1"/>
</dbReference>
<dbReference type="HPA" id="ENSG00000185745">
    <property type="expression patterns" value="Low tissue specificity"/>
</dbReference>
<dbReference type="MIM" id="147690">
    <property type="type" value="gene"/>
</dbReference>
<dbReference type="neXtProt" id="NX_P09914"/>
<dbReference type="OpenTargets" id="ENSG00000185745"/>
<dbReference type="PharmGKB" id="PA29648"/>
<dbReference type="VEuPathDB" id="HostDB:ENSG00000185745"/>
<dbReference type="eggNOG" id="KOG1124">
    <property type="taxonomic scope" value="Eukaryota"/>
</dbReference>
<dbReference type="GeneTree" id="ENSGT00950000182946"/>
<dbReference type="HOGENOM" id="CLU_043482_1_0_1"/>
<dbReference type="InParanoid" id="P09914"/>
<dbReference type="OMA" id="DHQVKDS"/>
<dbReference type="OrthoDB" id="10043504at2759"/>
<dbReference type="PAN-GO" id="P09914">
    <property type="GO annotations" value="3 GO annotations based on evolutionary models"/>
</dbReference>
<dbReference type="PhylomeDB" id="P09914"/>
<dbReference type="TreeFam" id="TF342671"/>
<dbReference type="PathwayCommons" id="P09914"/>
<dbReference type="Reactome" id="R-HSA-1169408">
    <property type="pathway name" value="ISG15 antiviral mechanism"/>
</dbReference>
<dbReference type="Reactome" id="R-HSA-909733">
    <property type="pathway name" value="Interferon alpha/beta signaling"/>
</dbReference>
<dbReference type="SignaLink" id="P09914"/>
<dbReference type="BioGRID-ORCS" id="3434">
    <property type="hits" value="12 hits in 1155 CRISPR screens"/>
</dbReference>
<dbReference type="ChiTaRS" id="IFIT1">
    <property type="organism name" value="human"/>
</dbReference>
<dbReference type="EvolutionaryTrace" id="P09914"/>
<dbReference type="GeneWiki" id="IFIT1"/>
<dbReference type="GenomeRNAi" id="3434"/>
<dbReference type="Pharos" id="P09914">
    <property type="development level" value="Tbio"/>
</dbReference>
<dbReference type="PRO" id="PR:P09914"/>
<dbReference type="Proteomes" id="UP000005640">
    <property type="component" value="Chromosome 10"/>
</dbReference>
<dbReference type="RNAct" id="P09914">
    <property type="molecule type" value="protein"/>
</dbReference>
<dbReference type="Bgee" id="ENSG00000185745">
    <property type="expression patterns" value="Expressed in pons and 202 other cell types or tissues"/>
</dbReference>
<dbReference type="GO" id="GO:0005737">
    <property type="term" value="C:cytoplasm"/>
    <property type="evidence" value="ECO:0000314"/>
    <property type="project" value="UniProtKB"/>
</dbReference>
<dbReference type="GO" id="GO:0005829">
    <property type="term" value="C:cytosol"/>
    <property type="evidence" value="ECO:0000314"/>
    <property type="project" value="HPA"/>
</dbReference>
<dbReference type="GO" id="GO:0043657">
    <property type="term" value="C:host cell"/>
    <property type="evidence" value="ECO:0007669"/>
    <property type="project" value="GOC"/>
</dbReference>
<dbReference type="GO" id="GO:0004857">
    <property type="term" value="F:enzyme inhibitor activity"/>
    <property type="evidence" value="ECO:0000314"/>
    <property type="project" value="BHF-UCL"/>
</dbReference>
<dbReference type="GO" id="GO:0003723">
    <property type="term" value="F:RNA binding"/>
    <property type="evidence" value="ECO:0000314"/>
    <property type="project" value="UniProt"/>
</dbReference>
<dbReference type="GO" id="GO:0140610">
    <property type="term" value="F:RNA sequestering activity"/>
    <property type="evidence" value="ECO:0000314"/>
    <property type="project" value="UniProtKB"/>
</dbReference>
<dbReference type="GO" id="GO:0140374">
    <property type="term" value="P:antiviral innate immune response"/>
    <property type="evidence" value="ECO:0000314"/>
    <property type="project" value="UniProt"/>
</dbReference>
<dbReference type="GO" id="GO:0071360">
    <property type="term" value="P:cellular response to exogenous dsRNA"/>
    <property type="evidence" value="ECO:0000314"/>
    <property type="project" value="BHF-UCL"/>
</dbReference>
<dbReference type="GO" id="GO:0071357">
    <property type="term" value="P:cellular response to type I interferon"/>
    <property type="evidence" value="ECO:0000314"/>
    <property type="project" value="BHF-UCL"/>
</dbReference>
<dbReference type="GO" id="GO:0051607">
    <property type="term" value="P:defense response to virus"/>
    <property type="evidence" value="ECO:0000318"/>
    <property type="project" value="GO_Central"/>
</dbReference>
<dbReference type="GO" id="GO:0019060">
    <property type="term" value="P:intracellular transport of viral protein in host cell"/>
    <property type="evidence" value="ECO:0000314"/>
    <property type="project" value="BHF-UCL"/>
</dbReference>
<dbReference type="GO" id="GO:0032091">
    <property type="term" value="P:negative regulation of protein binding"/>
    <property type="evidence" value="ECO:0000314"/>
    <property type="project" value="BHF-UCL"/>
</dbReference>
<dbReference type="GO" id="GO:0045071">
    <property type="term" value="P:negative regulation of viral genome replication"/>
    <property type="evidence" value="ECO:0000315"/>
    <property type="project" value="UniProtKB"/>
</dbReference>
<dbReference type="GO" id="GO:1904972">
    <property type="term" value="P:negative regulation of viral translation"/>
    <property type="evidence" value="ECO:0000314"/>
    <property type="project" value="UniProtKB"/>
</dbReference>
<dbReference type="GO" id="GO:0045070">
    <property type="term" value="P:positive regulation of viral genome replication"/>
    <property type="evidence" value="ECO:0000314"/>
    <property type="project" value="BHF-UCL"/>
</dbReference>
<dbReference type="GO" id="GO:0009615">
    <property type="term" value="P:response to virus"/>
    <property type="evidence" value="ECO:0000314"/>
    <property type="project" value="BHF-UCL"/>
</dbReference>
<dbReference type="FunFam" id="1.25.40.10:FF:000026">
    <property type="entry name" value="Interferon-induced protein with tetratricopeptide repeats 5"/>
    <property type="match status" value="1"/>
</dbReference>
<dbReference type="Gene3D" id="1.25.40.10">
    <property type="entry name" value="Tetratricopeptide repeat domain"/>
    <property type="match status" value="3"/>
</dbReference>
<dbReference type="InterPro" id="IPR011990">
    <property type="entry name" value="TPR-like_helical_dom_sf"/>
</dbReference>
<dbReference type="InterPro" id="IPR013105">
    <property type="entry name" value="TPR_2"/>
</dbReference>
<dbReference type="InterPro" id="IPR019734">
    <property type="entry name" value="TPR_rpt"/>
</dbReference>
<dbReference type="PANTHER" id="PTHR10271">
    <property type="entry name" value="INTERFERON-INDUCED PROTEIN WITH TETRATRICOPEPTIDE REPEATS"/>
    <property type="match status" value="1"/>
</dbReference>
<dbReference type="PANTHER" id="PTHR10271:SF34">
    <property type="entry name" value="INTERFERON-INDUCED PROTEIN WITH TETRATRICOPEPTIDE REPEATS 1"/>
    <property type="match status" value="1"/>
</dbReference>
<dbReference type="Pfam" id="PF13424">
    <property type="entry name" value="TPR_12"/>
    <property type="match status" value="1"/>
</dbReference>
<dbReference type="Pfam" id="PF07719">
    <property type="entry name" value="TPR_2"/>
    <property type="match status" value="1"/>
</dbReference>
<dbReference type="Pfam" id="PF13181">
    <property type="entry name" value="TPR_8"/>
    <property type="match status" value="1"/>
</dbReference>
<dbReference type="SMART" id="SM00028">
    <property type="entry name" value="TPR"/>
    <property type="match status" value="6"/>
</dbReference>
<dbReference type="SUPFAM" id="SSF48452">
    <property type="entry name" value="TPR-like"/>
    <property type="match status" value="3"/>
</dbReference>
<dbReference type="PROSITE" id="PS50005">
    <property type="entry name" value="TPR"/>
    <property type="match status" value="6"/>
</dbReference>
<dbReference type="PROSITE" id="PS50293">
    <property type="entry name" value="TPR_REGION"/>
    <property type="match status" value="3"/>
</dbReference>
<sequence>MSTNGDDHQVKDSLEQLRCHFTWELSIDDDEMPDLENRVLDQIEFLDTKYSVGIHNLLAYVKHLKGQNEEALKSLKEAENLMQEEHDNQANVRSLVTWGNFAWMYYHMGRLAEAQTYLDKVENICKKLSNPFRYRMECPEIDCEEGWALLKCGGKNYERAKACFEKVLEVDPENPESSAGYAISAYRLDGFKLATKNHKPFSLLPLRQAVRLNPDNGYIKVLLALKLQDEGQEAEGEKYIEEALANMSSQTYVFRYAAKFYRRKGSVDKALELLKKALQETPTSVLLHHQIGLCYKAQMIQIKEATKGQPRGQNREKLDKMIRSAIFHFESAVEKKPTFEVAHLDLARMYIEAGNHRKAEENFQKLLCMKPVVEETMQDIHFHYGRFQEFQKKSDVNAIIHYLKAIKIEQASLTRDKSINSLKKLVLRKLRRKALDLESLSLLGFVYKLEGNMNEALEYYERALRLAADFENSVRQGP</sequence>
<feature type="chain" id="PRO_0000106344" description="Antiviral innate immune response effector IFIT1">
    <location>
        <begin position="1"/>
        <end position="478"/>
    </location>
</feature>
<feature type="repeat" description="TPR 1" evidence="2">
    <location>
        <begin position="52"/>
        <end position="85"/>
    </location>
</feature>
<feature type="repeat" description="TPR 2" evidence="1">
    <location>
        <begin position="95"/>
        <end position="128"/>
    </location>
</feature>
<feature type="repeat" description="TPR 3" evidence="2">
    <location>
        <begin position="141"/>
        <end position="174"/>
    </location>
</feature>
<feature type="repeat" description="TPR 4" evidence="2">
    <location>
        <begin position="183"/>
        <end position="216"/>
    </location>
</feature>
<feature type="repeat" description="TPR 5" evidence="1">
    <location>
        <begin position="218"/>
        <end position="249"/>
    </location>
</feature>
<feature type="repeat" description="TPR 6" evidence="2">
    <location>
        <begin position="251"/>
        <end position="284"/>
    </location>
</feature>
<feature type="repeat" description="TPR 7" evidence="1">
    <location>
        <begin position="305"/>
        <end position="339"/>
    </location>
</feature>
<feature type="repeat" description="TPR 8" evidence="2">
    <location>
        <begin position="340"/>
        <end position="373"/>
    </location>
</feature>
<feature type="repeat" description="TPR 9" evidence="1">
    <location>
        <begin position="378"/>
        <end position="412"/>
    </location>
</feature>
<feature type="repeat" description="TPR 10" evidence="2">
    <location>
        <begin position="437"/>
        <end position="470"/>
    </location>
</feature>
<feature type="binding site" evidence="12 25 26 27 28">
    <location>
        <position position="147"/>
    </location>
    <ligand>
        <name>mRNA</name>
        <dbReference type="ChEBI" id="CHEBI:33699"/>
    </ligand>
    <ligandPart>
        <name>5'-(N(7)-methyl 5'-triphosphoguanosine)-(2'-O-methyl-ribonucleoside) residue</name>
        <dbReference type="ChEBI" id="CHEBI:167609"/>
    </ligandPart>
</feature>
<feature type="binding site" evidence="12 25 26 27 28">
    <location>
        <position position="190"/>
    </location>
    <ligand>
        <name>RNA</name>
        <dbReference type="ChEBI" id="CHEBI:33697"/>
    </ligand>
</feature>
<feature type="binding site" evidence="12 25 26 27 28">
    <location>
        <position position="259"/>
    </location>
    <ligand>
        <name>RNA</name>
        <dbReference type="ChEBI" id="CHEBI:33697"/>
    </ligand>
</feature>
<feature type="binding site" evidence="12 25 26 27 28">
    <location>
        <position position="289"/>
    </location>
    <ligand>
        <name>RNA</name>
        <dbReference type="ChEBI" id="CHEBI:33697"/>
    </ligand>
</feature>
<feature type="binding site" evidence="12 25 26 27 28">
    <location>
        <position position="290"/>
    </location>
    <ligand>
        <name>RNA</name>
        <dbReference type="ChEBI" id="CHEBI:33697"/>
    </ligand>
</feature>
<feature type="binding site" evidence="12 25 26 27 28">
    <location>
        <position position="336"/>
    </location>
    <ligand>
        <name>RNA</name>
        <dbReference type="ChEBI" id="CHEBI:33697"/>
    </ligand>
</feature>
<feature type="splice variant" id="VSP_054831" description="In isoform 2." evidence="16">
    <location>
        <begin position="1"/>
        <end position="31"/>
    </location>
</feature>
<feature type="sequence variant" id="VAR_052614" description="In dbSNP:rs11553019.">
    <original>P</original>
    <variation>H</variation>
    <location>
        <position position="131"/>
    </location>
</feature>
<feature type="mutagenesis site" description="Abolishes PPP-RNA-binding." evidence="11">
    <original>D</original>
    <variation>A</variation>
    <location>
        <position position="34"/>
    </location>
</feature>
<feature type="mutagenesis site" description="Loss of capped RNA-binding." evidence="12">
    <original>R</original>
    <variation>A</variation>
    <location>
        <position position="38"/>
    </location>
</feature>
<feature type="mutagenesis site" description="Abolishes PPP-RNA-binding." evidence="11">
    <original>R</original>
    <variation>M</variation>
    <location>
        <position position="38"/>
    </location>
</feature>
<feature type="mutagenesis site" description="Decreased capped RNA-binding. Decreased translation inhibition of viral RNAs lacking 2'-O-methylation of the 5' cap." evidence="12">
    <original>Q</original>
    <variation>A</variation>
    <location>
        <position position="42"/>
    </location>
</feature>
<feature type="mutagenesis site" description="Reduced PPP-RNA-binding. Decreased capped RNA-binding. Decreased translation inhibition of viral RNAs lacking 2'-O-methylation of the 5' cap." evidence="11 12">
    <original>Q</original>
    <variation>E</variation>
    <location>
        <position position="42"/>
    </location>
</feature>
<feature type="mutagenesis site" description="Decreased capped RNA-binding. Decreased translation inhibition of viral RNAs lacking 2'-O-methylation of the 5' cap." evidence="12">
    <original>L</original>
    <variation>A</variation>
    <location>
        <position position="46"/>
    </location>
</feature>
<feature type="mutagenesis site" description="No effect on capped RNA-binding." evidence="12">
    <original>T</original>
    <variation>A</variation>
    <location>
        <position position="48"/>
    </location>
</feature>
<feature type="mutagenesis site" description="Decreased capped RNA-binding. Decreased translation inhibition of viral RNAs lacking 2'-O-methylation of the 5' cap." evidence="12">
    <original>W</original>
    <variation>F</variation>
    <location>
        <position position="147"/>
    </location>
</feature>
<feature type="mutagenesis site" description="Loss of capped RNA-binding. Loss of translation inhibition of viral RNAs lacking 2'-O-methylation of the 5' cap." evidence="12">
    <original>W</original>
    <variation>M</variation>
    <location>
        <position position="147"/>
    </location>
</feature>
<feature type="mutagenesis site" description="Loss of capped RNA-binding. Loss of translation inhibition of viral RNAs lacking 2'-O-methylation of the 5' cap." evidence="11 12">
    <original>K</original>
    <variation>M</variation>
    <location>
        <position position="151"/>
    </location>
</feature>
<feature type="mutagenesis site" description="Reduced PPP-RNA-binding. Reduced capped RNA-binding. Loss of capped RNA-binding and decreased translation inhibition of viral RNAs lacking 2'-O-methylation of the 5' cap; when associated with A-289. Loss of capped RNA-binding and decreased translation inhibition of viral RNAs lacking 2'-O-methylation of the 5' cap; when associated with E-290." evidence="11 12">
    <original>Y</original>
    <variation>F</variation>
    <location>
        <position position="157"/>
    </location>
</feature>
<feature type="mutagenesis site" description="Decreased capped RNA-binding. Decreased translation inhibition of viral RNAs lacking 2'-O-methylation of the 5' cap." evidence="12">
    <original>E</original>
    <variation>A</variation>
    <location>
        <position position="176"/>
    </location>
</feature>
<feature type="mutagenesis site" description="Loss of capped RNA-binding. Loss of translation inhibition of viral RNAs lacking 2'-O-methylation of the 5' cap." evidence="9 11 12">
    <original>R</original>
    <variation>A</variation>
    <location>
        <position position="187"/>
    </location>
</feature>
<feature type="mutagenesis site" description="Abolishes PPP-RNA-binding. Loss of capped RNA-binding. Loss of translation inhibition of viral RNAs lacking 2'-O-methylation of the 5' cap." evidence="9 11 12">
    <original>R</original>
    <variation>H</variation>
    <location>
        <position position="187"/>
    </location>
</feature>
<feature type="mutagenesis site" description="No effect on capped RNA-binding." evidence="12">
    <original>N</original>
    <variation>A</variation>
    <location>
        <position position="216"/>
    </location>
</feature>
<feature type="mutagenesis site" description="No effect on capped RNA-binding." evidence="12">
    <original>N</original>
    <variation>D</variation>
    <location>
        <position position="216"/>
    </location>
</feature>
<feature type="mutagenesis site" description="Decreased capped RNA-binding. Decreased translation inhibition of viral RNAs lacking 2'-O-methylation of the 5' cap." evidence="12">
    <original>Y</original>
    <variation>A</variation>
    <location>
        <position position="218"/>
    </location>
</feature>
<feature type="mutagenesis site" description="Abolishes PPP-RNA-binding." evidence="11">
    <original>R</original>
    <variation>M</variation>
    <location>
        <position position="255"/>
    </location>
</feature>
<feature type="mutagenesis site" description="Decreased capped RNA-binding. Loss of capped RNA-binding and decreased translation inhibition of viral RNAs lacking 2'-O-methylation of the 5' cap; when associated with F-157." evidence="12">
    <original>H</original>
    <variation>A</variation>
    <location>
        <position position="289"/>
    </location>
</feature>
<feature type="mutagenesis site" description="Decreased capped RNA-binding. Loss of capped RNA-binding and decreased translation inhibition of viral RNAs lacking 2'-O-methylation of the 5' cap; when associated with F-157." evidence="12">
    <original>Q</original>
    <variation>E</variation>
    <location>
        <position position="290"/>
    </location>
</feature>
<feature type="sequence conflict" description="In Ref. 3; BAG52612." evidence="20" ref="3">
    <original>H</original>
    <variation>Y</variation>
    <location>
        <position position="198"/>
    </location>
</feature>
<feature type="sequence conflict" description="In Ref. 1; CAA27244." evidence="20" ref="1">
    <original>H</original>
    <variation>Y</variation>
    <location>
        <position position="383"/>
    </location>
</feature>
<feature type="sequence conflict" description="In Ref. 3; BAG52612." evidence="20" ref="3">
    <original>H</original>
    <variation>R</variation>
    <location>
        <position position="401"/>
    </location>
</feature>
<feature type="helix" evidence="29">
    <location>
        <begin position="9"/>
        <end position="16"/>
    </location>
</feature>
<feature type="helix" evidence="29">
    <location>
        <begin position="20"/>
        <end position="22"/>
    </location>
</feature>
<feature type="helix" evidence="29">
    <location>
        <begin position="29"/>
        <end position="31"/>
    </location>
</feature>
<feature type="helix" evidence="29">
    <location>
        <begin position="32"/>
        <end position="45"/>
    </location>
</feature>
<feature type="helix" evidence="29">
    <location>
        <begin position="52"/>
        <end position="64"/>
    </location>
</feature>
<feature type="helix" evidence="29">
    <location>
        <begin position="68"/>
        <end position="85"/>
    </location>
</feature>
<feature type="turn" evidence="29">
    <location>
        <begin position="86"/>
        <end position="88"/>
    </location>
</feature>
<feature type="helix" evidence="30">
    <location>
        <begin position="91"/>
        <end position="93"/>
    </location>
</feature>
<feature type="helix" evidence="29">
    <location>
        <begin position="94"/>
        <end position="108"/>
    </location>
</feature>
<feature type="helix" evidence="29">
    <location>
        <begin position="111"/>
        <end position="127"/>
    </location>
</feature>
<feature type="strand" evidence="29">
    <location>
        <begin position="131"/>
        <end position="134"/>
    </location>
</feature>
<feature type="helix" evidence="29">
    <location>
        <begin position="139"/>
        <end position="151"/>
    </location>
</feature>
<feature type="helix" evidence="29">
    <location>
        <begin position="154"/>
        <end position="156"/>
    </location>
</feature>
<feature type="helix" evidence="29">
    <location>
        <begin position="157"/>
        <end position="168"/>
    </location>
</feature>
<feature type="helix" evidence="29">
    <location>
        <begin position="175"/>
        <end position="191"/>
    </location>
</feature>
<feature type="turn" evidence="29">
    <location>
        <begin position="192"/>
        <end position="194"/>
    </location>
</feature>
<feature type="helix" evidence="29">
    <location>
        <begin position="203"/>
        <end position="212"/>
    </location>
</feature>
<feature type="helix" evidence="29">
    <location>
        <begin position="217"/>
        <end position="229"/>
    </location>
</feature>
<feature type="helix" evidence="29">
    <location>
        <begin position="233"/>
        <end position="244"/>
    </location>
</feature>
<feature type="helix" evidence="29">
    <location>
        <begin position="250"/>
        <end position="264"/>
    </location>
</feature>
<feature type="helix" evidence="29">
    <location>
        <begin position="267"/>
        <end position="280"/>
    </location>
</feature>
<feature type="helix" evidence="29">
    <location>
        <begin position="285"/>
        <end position="305"/>
    </location>
</feature>
<feature type="turn" evidence="29">
    <location>
        <begin position="306"/>
        <end position="308"/>
    </location>
</feature>
<feature type="helix" evidence="29">
    <location>
        <begin position="312"/>
        <end position="335"/>
    </location>
</feature>
<feature type="helix" evidence="29">
    <location>
        <begin position="340"/>
        <end position="352"/>
    </location>
</feature>
<feature type="helix" evidence="29">
    <location>
        <begin position="356"/>
        <end position="367"/>
    </location>
</feature>
<feature type="helix" evidence="29">
    <location>
        <begin position="376"/>
        <end position="390"/>
    </location>
</feature>
<feature type="helix" evidence="29">
    <location>
        <begin position="395"/>
        <end position="407"/>
    </location>
</feature>
<feature type="helix" evidence="29">
    <location>
        <begin position="413"/>
        <end position="432"/>
    </location>
</feature>
<feature type="helix" evidence="29">
    <location>
        <begin position="437"/>
        <end position="449"/>
    </location>
</feature>
<feature type="helix" evidence="29">
    <location>
        <begin position="453"/>
        <end position="466"/>
    </location>
</feature>
<comment type="function">
    <text evidence="5 9 10 11 12 13 15">Plays a key role in the innate immune response as part of an interferon-dependent multiprotein complex, recognizing and sequestering viral RNAs that lack host-specific 2'-O-methylation at their 5' cap. By distinguishing these RNAs from host mRNAs, inhibits their translation by competing with the translation initiation factor eIF4E (PubMed:21642987, PubMed:27240734, PubMed:39009378, PubMed:23334420, PubMed:28251928, PubMed:36285486). Could also prevent viral replication through its interaction with DNA replication origin-binding protein E1 of several viruses. Causes the translocation of E1 from the nucleus to the cytoplasm and can also inhibit its helicase activity in vitro (PubMed:19008854, PubMed:21976647). Exhibits antiviral activity against many viruses from the Flaviviridae (West Nile virus, Dengue virus, hepatitis C virus), Coronaviridae (human 229E coronavirus, SARS-CoV-2 and SARS-CoV), Poxviridae (vaccinia virus) and Togaviridae (Sindbis virus) families (PubMed:19008854, PubMed:21976647, PubMed:28251928, PubMed:36285486).</text>
</comment>
<comment type="subunit">
    <text evidence="4 6 7 8 9">Component of an interferon-dependent multiprotein complex, at least composed of IFIT1, IFIT2 and IFIT3 (PubMed:21190939, PubMed:21642987, PubMed:39009378). Interacts (via TPR repeats 1-4) with RPL15 (PubMed:21612406). Interacts with STING1/MITA; could disrupt STING1 interaction with MAVS or TBK1, acting as a negative-feedback regulator of virus-triggered signaling (PubMed:19416887). Interacts with EIF3E; this could be an alternative way to inhibit translation (PubMed:16023166).</text>
</comment>
<comment type="interaction">
    <interactant intactId="EBI-745117">
        <id>P09914</id>
    </interactant>
    <interactant intactId="EBI-3507167">
        <id>P09913</id>
        <label>IFIT2</label>
    </interactant>
    <organismsDiffer>false</organismsDiffer>
    <experiments>7</experiments>
</comment>
<comment type="interaction">
    <interactant intactId="EBI-745117">
        <id>P09914</id>
    </interactant>
    <interactant intactId="EBI-745127">
        <id>O14879</id>
        <label>IFIT3</label>
    </interactant>
    <organismsDiffer>false</organismsDiffer>
    <experiments>12</experiments>
</comment>
<comment type="interaction">
    <interactant intactId="EBI-745117">
        <id>P09914</id>
    </interactant>
    <interactant intactId="EBI-2800345">
        <id>Q86WV6</id>
        <label>STING1</label>
    </interactant>
    <organismsDiffer>false</organismsDiffer>
    <experiments>3</experiments>
</comment>
<comment type="interaction">
    <interactant intactId="EBI-745117">
        <id>P09914</id>
    </interactant>
    <interactant intactId="EBI-7015660">
        <id>P06789</id>
        <label>E1</label>
    </interactant>
    <organismsDiffer>true</organismsDiffer>
    <experiments>8</experiments>
</comment>
<comment type="subcellular location">
    <subcellularLocation>
        <location evidence="5 9">Cytoplasm</location>
    </subcellularLocation>
</comment>
<comment type="alternative products">
    <event type="alternative splicing"/>
    <isoform>
        <id>P09914-1</id>
        <name>1</name>
        <sequence type="displayed"/>
    </isoform>
    <isoform>
        <id>P09914-2</id>
        <name>2</name>
        <sequence type="described" ref="VSP_054831"/>
    </isoform>
</comment>
<comment type="induction">
    <text evidence="14">By type I interferons, dsRNAs and viruses.</text>
</comment>
<comment type="PTM">
    <text evidence="6">Phosphorylated.</text>
</comment>
<comment type="PTM">
    <text evidence="3">ISGylated.</text>
</comment>
<comment type="similarity">
    <text evidence="20">Belongs to the IFIT family.</text>
</comment>
<reference key="1">
    <citation type="journal article" date="1986" name="Eur. J. Biochem.">
        <title>Molecular cloning, full-length sequence and preliminary characterization of a 56-kDa protein induced by human interferons.</title>
        <authorList>
            <person name="Wathelet M."/>
            <person name="Moutschen S."/>
            <person name="Defilippi P."/>
            <person name="Cravador A."/>
            <person name="Collet M."/>
            <person name="Huez G."/>
            <person name="Content J."/>
        </authorList>
    </citation>
    <scope>NUCLEOTIDE SEQUENCE [MRNA] (ISOFORM 1)</scope>
    <scope>INDUCTION</scope>
</reference>
<reference key="2">
    <citation type="submission" date="2003-05" db="EMBL/GenBank/DDBJ databases">
        <title>Cloning of human full-length CDSs in BD Creator(TM) system donor vector.</title>
        <authorList>
            <person name="Kalnine N."/>
            <person name="Chen X."/>
            <person name="Rolfs A."/>
            <person name="Halleck A."/>
            <person name="Hines L."/>
            <person name="Eisenstein S."/>
            <person name="Koundinya M."/>
            <person name="Raphael J."/>
            <person name="Moreira D."/>
            <person name="Kelley T."/>
            <person name="LaBaer J."/>
            <person name="Lin Y."/>
            <person name="Phelan M."/>
            <person name="Farmer A."/>
        </authorList>
    </citation>
    <scope>NUCLEOTIDE SEQUENCE [LARGE SCALE MRNA] (ISOFORM 1)</scope>
</reference>
<reference key="3">
    <citation type="journal article" date="2004" name="Nat. Genet.">
        <title>Complete sequencing and characterization of 21,243 full-length human cDNAs.</title>
        <authorList>
            <person name="Ota T."/>
            <person name="Suzuki Y."/>
            <person name="Nishikawa T."/>
            <person name="Otsuki T."/>
            <person name="Sugiyama T."/>
            <person name="Irie R."/>
            <person name="Wakamatsu A."/>
            <person name="Hayashi K."/>
            <person name="Sato H."/>
            <person name="Nagai K."/>
            <person name="Kimura K."/>
            <person name="Makita H."/>
            <person name="Sekine M."/>
            <person name="Obayashi M."/>
            <person name="Nishi T."/>
            <person name="Shibahara T."/>
            <person name="Tanaka T."/>
            <person name="Ishii S."/>
            <person name="Yamamoto J."/>
            <person name="Saito K."/>
            <person name="Kawai Y."/>
            <person name="Isono Y."/>
            <person name="Nakamura Y."/>
            <person name="Nagahari K."/>
            <person name="Murakami K."/>
            <person name="Yasuda T."/>
            <person name="Iwayanagi T."/>
            <person name="Wagatsuma M."/>
            <person name="Shiratori A."/>
            <person name="Sudo H."/>
            <person name="Hosoiri T."/>
            <person name="Kaku Y."/>
            <person name="Kodaira H."/>
            <person name="Kondo H."/>
            <person name="Sugawara M."/>
            <person name="Takahashi M."/>
            <person name="Kanda K."/>
            <person name="Yokoi T."/>
            <person name="Furuya T."/>
            <person name="Kikkawa E."/>
            <person name="Omura Y."/>
            <person name="Abe K."/>
            <person name="Kamihara K."/>
            <person name="Katsuta N."/>
            <person name="Sato K."/>
            <person name="Tanikawa M."/>
            <person name="Yamazaki M."/>
            <person name="Ninomiya K."/>
            <person name="Ishibashi T."/>
            <person name="Yamashita H."/>
            <person name="Murakawa K."/>
            <person name="Fujimori K."/>
            <person name="Tanai H."/>
            <person name="Kimata M."/>
            <person name="Watanabe M."/>
            <person name="Hiraoka S."/>
            <person name="Chiba Y."/>
            <person name="Ishida S."/>
            <person name="Ono Y."/>
            <person name="Takiguchi S."/>
            <person name="Watanabe S."/>
            <person name="Yosida M."/>
            <person name="Hotuta T."/>
            <person name="Kusano J."/>
            <person name="Kanehori K."/>
            <person name="Takahashi-Fujii A."/>
            <person name="Hara H."/>
            <person name="Tanase T.-O."/>
            <person name="Nomura Y."/>
            <person name="Togiya S."/>
            <person name="Komai F."/>
            <person name="Hara R."/>
            <person name="Takeuchi K."/>
            <person name="Arita M."/>
            <person name="Imose N."/>
            <person name="Musashino K."/>
            <person name="Yuuki H."/>
            <person name="Oshima A."/>
            <person name="Sasaki N."/>
            <person name="Aotsuka S."/>
            <person name="Yoshikawa Y."/>
            <person name="Matsunawa H."/>
            <person name="Ichihara T."/>
            <person name="Shiohata N."/>
            <person name="Sano S."/>
            <person name="Moriya S."/>
            <person name="Momiyama H."/>
            <person name="Satoh N."/>
            <person name="Takami S."/>
            <person name="Terashima Y."/>
            <person name="Suzuki O."/>
            <person name="Nakagawa S."/>
            <person name="Senoh A."/>
            <person name="Mizoguchi H."/>
            <person name="Goto Y."/>
            <person name="Shimizu F."/>
            <person name="Wakebe H."/>
            <person name="Hishigaki H."/>
            <person name="Watanabe T."/>
            <person name="Sugiyama A."/>
            <person name="Takemoto M."/>
            <person name="Kawakami B."/>
            <person name="Yamazaki M."/>
            <person name="Watanabe K."/>
            <person name="Kumagai A."/>
            <person name="Itakura S."/>
            <person name="Fukuzumi Y."/>
            <person name="Fujimori Y."/>
            <person name="Komiyama M."/>
            <person name="Tashiro H."/>
            <person name="Tanigami A."/>
            <person name="Fujiwara T."/>
            <person name="Ono T."/>
            <person name="Yamada K."/>
            <person name="Fujii Y."/>
            <person name="Ozaki K."/>
            <person name="Hirao M."/>
            <person name="Ohmori Y."/>
            <person name="Kawabata A."/>
            <person name="Hikiji T."/>
            <person name="Kobatake N."/>
            <person name="Inagaki H."/>
            <person name="Ikema Y."/>
            <person name="Okamoto S."/>
            <person name="Okitani R."/>
            <person name="Kawakami T."/>
            <person name="Noguchi S."/>
            <person name="Itoh T."/>
            <person name="Shigeta K."/>
            <person name="Senba T."/>
            <person name="Matsumura K."/>
            <person name="Nakajima Y."/>
            <person name="Mizuno T."/>
            <person name="Morinaga M."/>
            <person name="Sasaki M."/>
            <person name="Togashi T."/>
            <person name="Oyama M."/>
            <person name="Hata H."/>
            <person name="Watanabe M."/>
            <person name="Komatsu T."/>
            <person name="Mizushima-Sugano J."/>
            <person name="Satoh T."/>
            <person name="Shirai Y."/>
            <person name="Takahashi Y."/>
            <person name="Nakagawa K."/>
            <person name="Okumura K."/>
            <person name="Nagase T."/>
            <person name="Nomura N."/>
            <person name="Kikuchi H."/>
            <person name="Masuho Y."/>
            <person name="Yamashita R."/>
            <person name="Nakai K."/>
            <person name="Yada T."/>
            <person name="Nakamura Y."/>
            <person name="Ohara O."/>
            <person name="Isogai T."/>
            <person name="Sugano S."/>
        </authorList>
    </citation>
    <scope>NUCLEOTIDE SEQUENCE [LARGE SCALE MRNA] (ISOFORMS 1 AND 2)</scope>
    <source>
        <tissue>Small intestine</tissue>
        <tissue>Synovium</tissue>
    </source>
</reference>
<reference key="4">
    <citation type="journal article" date="2004" name="Nature">
        <title>The DNA sequence and comparative analysis of human chromosome 10.</title>
        <authorList>
            <person name="Deloukas P."/>
            <person name="Earthrowl M.E."/>
            <person name="Grafham D.V."/>
            <person name="Rubenfield M."/>
            <person name="French L."/>
            <person name="Steward C.A."/>
            <person name="Sims S.K."/>
            <person name="Jones M.C."/>
            <person name="Searle S."/>
            <person name="Scott C."/>
            <person name="Howe K."/>
            <person name="Hunt S.E."/>
            <person name="Andrews T.D."/>
            <person name="Gilbert J.G.R."/>
            <person name="Swarbreck D."/>
            <person name="Ashurst J.L."/>
            <person name="Taylor A."/>
            <person name="Battles J."/>
            <person name="Bird C.P."/>
            <person name="Ainscough R."/>
            <person name="Almeida J.P."/>
            <person name="Ashwell R.I.S."/>
            <person name="Ambrose K.D."/>
            <person name="Babbage A.K."/>
            <person name="Bagguley C.L."/>
            <person name="Bailey J."/>
            <person name="Banerjee R."/>
            <person name="Bates K."/>
            <person name="Beasley H."/>
            <person name="Bray-Allen S."/>
            <person name="Brown A.J."/>
            <person name="Brown J.Y."/>
            <person name="Burford D.C."/>
            <person name="Burrill W."/>
            <person name="Burton J."/>
            <person name="Cahill P."/>
            <person name="Camire D."/>
            <person name="Carter N.P."/>
            <person name="Chapman J.C."/>
            <person name="Clark S.Y."/>
            <person name="Clarke G."/>
            <person name="Clee C.M."/>
            <person name="Clegg S."/>
            <person name="Corby N."/>
            <person name="Coulson A."/>
            <person name="Dhami P."/>
            <person name="Dutta I."/>
            <person name="Dunn M."/>
            <person name="Faulkner L."/>
            <person name="Frankish A."/>
            <person name="Frankland J.A."/>
            <person name="Garner P."/>
            <person name="Garnett J."/>
            <person name="Gribble S."/>
            <person name="Griffiths C."/>
            <person name="Grocock R."/>
            <person name="Gustafson E."/>
            <person name="Hammond S."/>
            <person name="Harley J.L."/>
            <person name="Hart E."/>
            <person name="Heath P.D."/>
            <person name="Ho T.P."/>
            <person name="Hopkins B."/>
            <person name="Horne J."/>
            <person name="Howden P.J."/>
            <person name="Huckle E."/>
            <person name="Hynds C."/>
            <person name="Johnson C."/>
            <person name="Johnson D."/>
            <person name="Kana A."/>
            <person name="Kay M."/>
            <person name="Kimberley A.M."/>
            <person name="Kershaw J.K."/>
            <person name="Kokkinaki M."/>
            <person name="Laird G.K."/>
            <person name="Lawlor S."/>
            <person name="Lee H.M."/>
            <person name="Leongamornlert D.A."/>
            <person name="Laird G."/>
            <person name="Lloyd C."/>
            <person name="Lloyd D.M."/>
            <person name="Loveland J."/>
            <person name="Lovell J."/>
            <person name="McLaren S."/>
            <person name="McLay K.E."/>
            <person name="McMurray A."/>
            <person name="Mashreghi-Mohammadi M."/>
            <person name="Matthews L."/>
            <person name="Milne S."/>
            <person name="Nickerson T."/>
            <person name="Nguyen M."/>
            <person name="Overton-Larty E."/>
            <person name="Palmer S.A."/>
            <person name="Pearce A.V."/>
            <person name="Peck A.I."/>
            <person name="Pelan S."/>
            <person name="Phillimore B."/>
            <person name="Porter K."/>
            <person name="Rice C.M."/>
            <person name="Rogosin A."/>
            <person name="Ross M.T."/>
            <person name="Sarafidou T."/>
            <person name="Sehra H.K."/>
            <person name="Shownkeen R."/>
            <person name="Skuce C.D."/>
            <person name="Smith M."/>
            <person name="Standring L."/>
            <person name="Sycamore N."/>
            <person name="Tester J."/>
            <person name="Thorpe A."/>
            <person name="Torcasso W."/>
            <person name="Tracey A."/>
            <person name="Tromans A."/>
            <person name="Tsolas J."/>
            <person name="Wall M."/>
            <person name="Walsh J."/>
            <person name="Wang H."/>
            <person name="Weinstock K."/>
            <person name="West A.P."/>
            <person name="Willey D.L."/>
            <person name="Whitehead S.L."/>
            <person name="Wilming L."/>
            <person name="Wray P.W."/>
            <person name="Young L."/>
            <person name="Chen Y."/>
            <person name="Lovering R.C."/>
            <person name="Moschonas N.K."/>
            <person name="Siebert R."/>
            <person name="Fechtel K."/>
            <person name="Bentley D."/>
            <person name="Durbin R.M."/>
            <person name="Hubbard T."/>
            <person name="Doucette-Stamm L."/>
            <person name="Beck S."/>
            <person name="Smith D.R."/>
            <person name="Rogers J."/>
        </authorList>
    </citation>
    <scope>NUCLEOTIDE SEQUENCE [LARGE SCALE GENOMIC DNA]</scope>
</reference>
<reference key="5">
    <citation type="submission" date="2005-09" db="EMBL/GenBank/DDBJ databases">
        <authorList>
            <person name="Mural R.J."/>
            <person name="Istrail S."/>
            <person name="Sutton G."/>
            <person name="Florea L."/>
            <person name="Halpern A.L."/>
            <person name="Mobarry C.M."/>
            <person name="Lippert R."/>
            <person name="Walenz B."/>
            <person name="Shatkay H."/>
            <person name="Dew I."/>
            <person name="Miller J.R."/>
            <person name="Flanigan M.J."/>
            <person name="Edwards N.J."/>
            <person name="Bolanos R."/>
            <person name="Fasulo D."/>
            <person name="Halldorsson B.V."/>
            <person name="Hannenhalli S."/>
            <person name="Turner R."/>
            <person name="Yooseph S."/>
            <person name="Lu F."/>
            <person name="Nusskern D.R."/>
            <person name="Shue B.C."/>
            <person name="Zheng X.H."/>
            <person name="Zhong F."/>
            <person name="Delcher A.L."/>
            <person name="Huson D.H."/>
            <person name="Kravitz S.A."/>
            <person name="Mouchard L."/>
            <person name="Reinert K."/>
            <person name="Remington K.A."/>
            <person name="Clark A.G."/>
            <person name="Waterman M.S."/>
            <person name="Eichler E.E."/>
            <person name="Adams M.D."/>
            <person name="Hunkapiller M.W."/>
            <person name="Myers E.W."/>
            <person name="Venter J.C."/>
        </authorList>
    </citation>
    <scope>NUCLEOTIDE SEQUENCE [LARGE SCALE GENOMIC DNA]</scope>
</reference>
<reference key="6">
    <citation type="journal article" date="2004" name="Genome Res.">
        <title>The status, quality, and expansion of the NIH full-length cDNA project: the Mammalian Gene Collection (MGC).</title>
        <authorList>
            <consortium name="The MGC Project Team"/>
        </authorList>
    </citation>
    <scope>NUCLEOTIDE SEQUENCE [LARGE SCALE MRNA] (ISOFORM 1)</scope>
    <source>
        <tissue>Prostate</tissue>
    </source>
</reference>
<reference key="7">
    <citation type="journal article" date="1983" name="Nucleic Acids Res.">
        <title>Interferon-induced 56,000 Mr protein and its mRNA in human cells: molecular cloning and partial sequence of the cDNA.</title>
        <authorList>
            <person name="Chebath J."/>
            <person name="Merlin G."/>
            <person name="Metz R."/>
            <person name="Benech P."/>
            <person name="Revel M."/>
        </authorList>
    </citation>
    <scope>NUCLEOTIDE SEQUENCE [MRNA] OF 413-478</scope>
</reference>
<reference key="8">
    <citation type="journal article" date="1987" name="Eur. J. Biochem.">
        <title>New inducers revealed by the promoter sequence analysis of two interferon-activated human genes.</title>
        <authorList>
            <person name="Wathelet M.G."/>
            <person name="Clauss I.M."/>
            <person name="Nols C.B."/>
            <person name="Content J."/>
            <person name="Huez G.A."/>
        </authorList>
    </citation>
    <scope>NUCLEOTIDE SEQUENCE [GENOMIC DNA] OF 1-2</scope>
</reference>
<reference key="9">
    <citation type="journal article" date="1988" name="FEBS Lett.">
        <title>The IFI-56K and IFI-54K interferon-inducible human genes belong to the same gene family.</title>
        <authorList>
            <person name="Wathelet M.G."/>
            <person name="Clauss I.M."/>
            <person name="Content J."/>
            <person name="Huez G.A."/>
        </authorList>
    </citation>
    <scope>IDENTIFICATION</scope>
</reference>
<reference key="10">
    <citation type="journal article" date="2005" name="Proc. Natl. Acad. Sci. U.S.A.">
        <title>Human ISG15 conjugation targets both IFN-induced and constitutively expressed proteins functioning in diverse cellular pathways.</title>
        <authorList>
            <person name="Zhao C."/>
            <person name="Denison C."/>
            <person name="Huibregtse J.M."/>
            <person name="Gygi S.P."/>
            <person name="Krug R.M."/>
        </authorList>
    </citation>
    <scope>ISGYLATION</scope>
</reference>
<reference key="11">
    <citation type="journal article" date="2005" name="Virology">
        <title>Induction and mode of action of the viral stress-inducible murine proteins, P56 and P54.</title>
        <authorList>
            <person name="Terenzi F."/>
            <person name="Pal S."/>
            <person name="Sen G.C."/>
        </authorList>
    </citation>
    <scope>INTERACTION WITH EIF3E</scope>
</reference>
<reference key="12">
    <citation type="journal article" date="2008" name="EMBO J.">
        <title>Interferon-inducible protein, P56, inhibits HPV DNA replication by binding to the viral protein E1.</title>
        <authorList>
            <person name="Terenzi F."/>
            <person name="Saikia P."/>
            <person name="Sen G.C."/>
        </authorList>
    </citation>
    <scope>FUNCTION</scope>
    <scope>SUBCELLULAR LOCATION</scope>
</reference>
<reference key="13">
    <citation type="journal article" date="2009" name="Proc. Natl. Acad. Sci. U.S.A.">
        <title>ISG56 is a negative-feedback regulator of virus-triggered signaling and cellular antiviral response.</title>
        <authorList>
            <person name="Li Y."/>
            <person name="Li C."/>
            <person name="Xue P."/>
            <person name="Zhong B."/>
            <person name="Mao A.P."/>
            <person name="Ran Y."/>
            <person name="Chen H."/>
            <person name="Wang Y.Y."/>
            <person name="Yang F."/>
            <person name="Shu H.B."/>
        </authorList>
    </citation>
    <scope>INTERACTION WITH STING1/MITA</scope>
    <scope>PHOSPHORYLATION</scope>
</reference>
<reference key="14">
    <citation type="journal article" date="2011" name="BMC Syst. Biol.">
        <title>Initial characterization of the human central proteome.</title>
        <authorList>
            <person name="Burkard T.R."/>
            <person name="Planyavsky M."/>
            <person name="Kaupe I."/>
            <person name="Breitwieser F.P."/>
            <person name="Buerckstuemmer T."/>
            <person name="Bennett K.L."/>
            <person name="Superti-Furga G."/>
            <person name="Colinge J."/>
        </authorList>
    </citation>
    <scope>IDENTIFICATION BY MASS SPECTROMETRY [LARGE SCALE ANALYSIS]</scope>
</reference>
<reference key="15">
    <citation type="journal article" date="2011" name="DNA Cell Biol.">
        <title>A novel interaction between interferon-inducible protein p56 and ribosomal protein L15 in gastric cancer cells.</title>
        <authorList>
            <person name="Hsu Y.A."/>
            <person name="Lin H.J."/>
            <person name="Sheu J.J."/>
            <person name="Shieh F.K."/>
            <person name="Chen S.Y."/>
            <person name="Lai C.H."/>
            <person name="Tsai F.J."/>
            <person name="Wan L."/>
            <person name="Chen B.H."/>
        </authorList>
    </citation>
    <scope>INTERACTION WITH RPL15</scope>
</reference>
<reference key="16">
    <citation type="journal article" date="2011" name="J. Biol. Chem.">
        <title>The interferon stimulated gene 54 promotes apoptosis.</title>
        <authorList>
            <person name="Stawowczyk M."/>
            <person name="Van Scoy S."/>
            <person name="Kumar K.P."/>
            <person name="Reich N.C."/>
        </authorList>
    </citation>
    <scope>INTERACTION WITH IFIT2</scope>
</reference>
<reference key="17">
    <citation type="journal article" date="2011" name="J. Virol.">
        <title>ISG56 and IFITM1 proteins inhibit hepatitis C virus replication.</title>
        <authorList>
            <person name="Raychoudhuri A."/>
            <person name="Shrivastava S."/>
            <person name="Steele R."/>
            <person name="Kim H."/>
            <person name="Ray R."/>
            <person name="Ray R.B."/>
        </authorList>
    </citation>
    <scope>FUNCTION</scope>
</reference>
<reference key="18">
    <citation type="journal article" date="2011" name="Nat. Immunol.">
        <title>IFIT1 is an antiviral protein that recognizes 5'-triphosphate RNA.</title>
        <authorList>
            <person name="Pichlmair A."/>
            <person name="Lassnig C."/>
            <person name="Eberle C.A."/>
            <person name="Gorna M.W."/>
            <person name="Baumann C.L."/>
            <person name="Burkard T.R."/>
            <person name="Buerckstuemmer T."/>
            <person name="Stefanovic A."/>
            <person name="Krieger S."/>
            <person name="Bennett K.L."/>
            <person name="Ruelicke T."/>
            <person name="Weber F."/>
            <person name="Colinge J."/>
            <person name="Mueller M."/>
            <person name="Superti-Furga G."/>
        </authorList>
    </citation>
    <scope>FUNCTION</scope>
    <scope>INTERACTION WITH IFIT2 AND IFIT3</scope>
    <scope>SUBCELLULAR LOCATION</scope>
    <scope>MUTAGENESIS OF ARG-187</scope>
</reference>
<reference key="19">
    <citation type="journal article" date="2016" name="Elife">
        <title>Evolution-guided functional analyses reveal diverse antiviral specificities encoded by IFIT1 genes in mammals.</title>
        <authorList>
            <person name="Daugherty M.D."/>
            <person name="Schaller A.M."/>
            <person name="Geballe A.P."/>
            <person name="Malik H.S."/>
        </authorList>
    </citation>
    <scope>FUNCTION</scope>
</reference>
<reference key="20">
    <citation type="journal article" date="2022" name="EMBO Rep.">
        <title>Nsp16 shields SARS-CoV-2 from efficient MDA5 sensing and IFIT1-mediated restriction.</title>
        <authorList>
            <person name="Russ A."/>
            <person name="Wittmann S."/>
            <person name="Tsukamoto Y."/>
            <person name="Herrmann A."/>
            <person name="Deutschmann J."/>
            <person name="Lagisquet J."/>
            <person name="Ensser A."/>
            <person name="Kato H."/>
            <person name="Gramberg T."/>
        </authorList>
    </citation>
    <scope>FUNCTION</scope>
</reference>
<reference key="21">
    <citation type="journal article" date="2024" name="RNA">
        <title>Cap-related modifications of RNA regulate binding to IFIT proteins.</title>
        <authorList>
            <person name="Geng J."/>
            <person name="Chrabaszczewska M."/>
            <person name="Kurpiejewski K."/>
            <person name="Stankiewicz-Drogon A."/>
            <person name="Jankowska-Anyszka M."/>
            <person name="Darzynkiewicz E."/>
            <person name="Grzela R."/>
        </authorList>
    </citation>
    <scope>FUNCTION</scope>
    <scope>SUBUNIT</scope>
</reference>
<reference evidence="24" key="22">
    <citation type="journal article" date="2013" name="Nature">
        <title>Structural basis for viral 5'-PPP-RNA recognition by human IFIT proteins.</title>
        <authorList>
            <person name="Abbas Y.M."/>
            <person name="Pichlmair A."/>
            <person name="Gorna M.W."/>
            <person name="Superti-Furga G."/>
            <person name="Nagar B."/>
        </authorList>
    </citation>
    <scope>X-RAY CRYSTALLOGRAPHY (1.9 ANGSTROMS) OF 7-279</scope>
    <scope>FUNCTION</scope>
    <scope>MUTAGENESIS OF ASP-34; ARG-38; GLN-42; LYS-151; TYR-157; ARG-187 AND ARG-255</scope>
</reference>
<reference evidence="25 26 27 28" key="23">
    <citation type="journal article" date="2017" name="Proc. Natl. Acad. Sci. U.S.A.">
        <title>Structure of human IFIT1 with capped RNA reveals adaptable mRNA binding and mechanisms for sensing N1 and N2 ribose 2'-O methylations.</title>
        <authorList>
            <person name="Abbas Y.M."/>
            <person name="Laudenbach B.T."/>
            <person name="Martinez-Montero S."/>
            <person name="Cencic R."/>
            <person name="Habjan M."/>
            <person name="Pichlmair A."/>
            <person name="Damha M.J."/>
            <person name="Pelletier J."/>
            <person name="Nagar B."/>
        </authorList>
    </citation>
    <scope>X-RAY CRYSTALLOGRAPHY (1.58 ANGSTROMS) IN COMPLEX WITH CAPPED AND UNCAPPED RNA</scope>
    <scope>FUNCTION</scope>
    <scope>MUTAGENESIS OF ARG-38; GLN-42; LEU-46; THR-48; TRP-147; LYS-151; GLU-176; ASN-216; TYR-218; HIS-289 AND GLN-290</scope>
</reference>
<accession>P09914</accession>
<accession>B3KS50</accession>
<accession>D3DR31</accession>
<accession>Q5T7J1</accession>
<accession>Q96QM5</accession>
<proteinExistence type="evidence at protein level"/>
<evidence type="ECO:0000255" key="1"/>
<evidence type="ECO:0000255" key="2">
    <source>
        <dbReference type="PROSITE-ProRule" id="PRU00339"/>
    </source>
</evidence>
<evidence type="ECO:0000269" key="3">
    <source>
    </source>
</evidence>
<evidence type="ECO:0000269" key="4">
    <source>
    </source>
</evidence>
<evidence type="ECO:0000269" key="5">
    <source>
    </source>
</evidence>
<evidence type="ECO:0000269" key="6">
    <source>
    </source>
</evidence>
<evidence type="ECO:0000269" key="7">
    <source>
    </source>
</evidence>
<evidence type="ECO:0000269" key="8">
    <source>
    </source>
</evidence>
<evidence type="ECO:0000269" key="9">
    <source>
    </source>
</evidence>
<evidence type="ECO:0000269" key="10">
    <source>
    </source>
</evidence>
<evidence type="ECO:0000269" key="11">
    <source>
    </source>
</evidence>
<evidence type="ECO:0000269" key="12">
    <source>
    </source>
</evidence>
<evidence type="ECO:0000269" key="13">
    <source>
    </source>
</evidence>
<evidence type="ECO:0000269" key="14">
    <source>
    </source>
</evidence>
<evidence type="ECO:0000269" key="15">
    <source>
    </source>
</evidence>
<evidence type="ECO:0000303" key="16">
    <source>
    </source>
</evidence>
<evidence type="ECO:0000303" key="17">
    <source>
    </source>
</evidence>
<evidence type="ECO:0000303" key="18">
    <source>
    </source>
</evidence>
<evidence type="ECO:0000303" key="19">
    <source>
    </source>
</evidence>
<evidence type="ECO:0000305" key="20"/>
<evidence type="ECO:0000305" key="21">
    <source>
    </source>
</evidence>
<evidence type="ECO:0000305" key="22">
    <source>
    </source>
</evidence>
<evidence type="ECO:0000312" key="23">
    <source>
        <dbReference type="HGNC" id="HGNC:5407"/>
    </source>
</evidence>
<evidence type="ECO:0007744" key="24">
    <source>
        <dbReference type="PDB" id="4HOU"/>
    </source>
</evidence>
<evidence type="ECO:0007744" key="25">
    <source>
        <dbReference type="PDB" id="5UDI"/>
    </source>
</evidence>
<evidence type="ECO:0007744" key="26">
    <source>
        <dbReference type="PDB" id="5UDJ"/>
    </source>
</evidence>
<evidence type="ECO:0007744" key="27">
    <source>
        <dbReference type="PDB" id="5UDK"/>
    </source>
</evidence>
<evidence type="ECO:0007744" key="28">
    <source>
        <dbReference type="PDB" id="5UDL"/>
    </source>
</evidence>
<evidence type="ECO:0007829" key="29">
    <source>
        <dbReference type="PDB" id="5UDI"/>
    </source>
</evidence>
<evidence type="ECO:0007829" key="30">
    <source>
        <dbReference type="PDB" id="6C6K"/>
    </source>
</evidence>
<organism>
    <name type="scientific">Homo sapiens</name>
    <name type="common">Human</name>
    <dbReference type="NCBI Taxonomy" id="9606"/>
    <lineage>
        <taxon>Eukaryota</taxon>
        <taxon>Metazoa</taxon>
        <taxon>Chordata</taxon>
        <taxon>Craniata</taxon>
        <taxon>Vertebrata</taxon>
        <taxon>Euteleostomi</taxon>
        <taxon>Mammalia</taxon>
        <taxon>Eutheria</taxon>
        <taxon>Euarchontoglires</taxon>
        <taxon>Primates</taxon>
        <taxon>Haplorrhini</taxon>
        <taxon>Catarrhini</taxon>
        <taxon>Hominidae</taxon>
        <taxon>Homo</taxon>
    </lineage>
</organism>
<protein>
    <recommendedName>
        <fullName evidence="21">Antiviral innate immune response effector IFIT1</fullName>
        <shortName>IFIT-1</shortName>
    </recommendedName>
    <alternativeName>
        <fullName evidence="22">Interferon-induced 56 kDa protein</fullName>
        <shortName evidence="19">IFI-56K</shortName>
        <shortName evidence="17">P56</shortName>
    </alternativeName>
    <alternativeName>
        <fullName evidence="23">Interferon-induced protein with tetratricopeptide repeats 1</fullName>
    </alternativeName>
</protein>